<evidence type="ECO:0000255" key="1">
    <source>
        <dbReference type="HAMAP-Rule" id="MF_00229"/>
    </source>
</evidence>
<sequence length="511" mass="53340">MTIILKPGSVPLETLEKIYREGLPVRIDPAFHAGIEKAAARIAEIAAGDAPVYGINTGFGKLASIRIAAGDVATLQRNLILSHCCGVGEPLSENIVRLIMALKLVSLGRGASGVRLEVITLIEAMLEKGVIPMIPEKGSVGASGDLAPLAHMTAAMIGEGEAFYRGERLSGAKALGKAGLKPVVLAAKEGLALINGTQTSTALALAGLFRAHRAVRTALITGALSTDAAMGSDAPFHEEIHQLRGHKGQIDAGRALRTLLEGSAIRRSHLEGDQRVQDPYCIRCQPQVDGACLDILRQAARTLEIEANAVTDNPLVLSDGRAVSGGNFHAEPVAFAADQIALAVCEIGAISQRRIALLVDPSLSFGLPAFLTRKPGLNSGLMIAEVTSAALMSENKQMAHPASVDSTPTSANQEDHVSMACHGARRLLQMTANLNAIIGIEALTGALGVELRKPLTTSAELAKVIAALRAKVVTLEEDRYMADDLKAAAELVADGTLSGVISAGILPDLEA</sequence>
<comment type="catalytic activity">
    <reaction evidence="1">
        <text>L-histidine = trans-urocanate + NH4(+)</text>
        <dbReference type="Rhea" id="RHEA:21232"/>
        <dbReference type="ChEBI" id="CHEBI:17771"/>
        <dbReference type="ChEBI" id="CHEBI:28938"/>
        <dbReference type="ChEBI" id="CHEBI:57595"/>
        <dbReference type="EC" id="4.3.1.3"/>
    </reaction>
</comment>
<comment type="pathway">
    <text evidence="1">Amino-acid degradation; L-histidine degradation into L-glutamate; N-formimidoyl-L-glutamate from L-histidine: step 1/3.</text>
</comment>
<comment type="subcellular location">
    <subcellularLocation>
        <location evidence="1">Cytoplasm</location>
    </subcellularLocation>
</comment>
<comment type="PTM">
    <text evidence="1">Contains an active site 4-methylidene-imidazol-5-one (MIO), which is formed autocatalytically by cyclization and dehydration of residues Ala-Ser-Gly.</text>
</comment>
<comment type="similarity">
    <text evidence="1">Belongs to the PAL/histidase family.</text>
</comment>
<accession>Q8FVB4</accession>
<accession>G0KDU0</accession>
<name>HUTH_BRUSU</name>
<reference key="1">
    <citation type="journal article" date="2002" name="Proc. Natl. Acad. Sci. U.S.A.">
        <title>The Brucella suis genome reveals fundamental similarities between animal and plant pathogens and symbionts.</title>
        <authorList>
            <person name="Paulsen I.T."/>
            <person name="Seshadri R."/>
            <person name="Nelson K.E."/>
            <person name="Eisen J.A."/>
            <person name="Heidelberg J.F."/>
            <person name="Read T.D."/>
            <person name="Dodson R.J."/>
            <person name="Umayam L.A."/>
            <person name="Brinkac L.M."/>
            <person name="Beanan M.J."/>
            <person name="Daugherty S.C."/>
            <person name="DeBoy R.T."/>
            <person name="Durkin A.S."/>
            <person name="Kolonay J.F."/>
            <person name="Madupu R."/>
            <person name="Nelson W.C."/>
            <person name="Ayodeji B."/>
            <person name="Kraul M."/>
            <person name="Shetty J."/>
            <person name="Malek J.A."/>
            <person name="Van Aken S.E."/>
            <person name="Riedmuller S."/>
            <person name="Tettelin H."/>
            <person name="Gill S.R."/>
            <person name="White O."/>
            <person name="Salzberg S.L."/>
            <person name="Hoover D.L."/>
            <person name="Lindler L.E."/>
            <person name="Halling S.M."/>
            <person name="Boyle S.M."/>
            <person name="Fraser C.M."/>
        </authorList>
    </citation>
    <scope>NUCLEOTIDE SEQUENCE [LARGE SCALE GENOMIC DNA]</scope>
    <source>
        <strain>1330</strain>
    </source>
</reference>
<reference key="2">
    <citation type="journal article" date="2011" name="J. Bacteriol.">
        <title>Revised genome sequence of Brucella suis 1330.</title>
        <authorList>
            <person name="Tae H."/>
            <person name="Shallom S."/>
            <person name="Settlage R."/>
            <person name="Preston D."/>
            <person name="Adams L.G."/>
            <person name="Garner H.R."/>
        </authorList>
    </citation>
    <scope>NUCLEOTIDE SEQUENCE [LARGE SCALE GENOMIC DNA]</scope>
    <source>
        <strain>1330</strain>
    </source>
</reference>
<feature type="chain" id="PRO_0000160996" description="Histidine ammonia-lyase">
    <location>
        <begin position="1"/>
        <end position="511"/>
    </location>
</feature>
<feature type="modified residue" description="2,3-didehydroalanine (Ser)" evidence="1">
    <location>
        <position position="143"/>
    </location>
</feature>
<feature type="cross-link" description="5-imidazolinone (Ala-Gly)" evidence="1">
    <location>
        <begin position="142"/>
        <end position="144"/>
    </location>
</feature>
<organism>
    <name type="scientific">Brucella suis biovar 1 (strain 1330)</name>
    <dbReference type="NCBI Taxonomy" id="204722"/>
    <lineage>
        <taxon>Bacteria</taxon>
        <taxon>Pseudomonadati</taxon>
        <taxon>Pseudomonadota</taxon>
        <taxon>Alphaproteobacteria</taxon>
        <taxon>Hyphomicrobiales</taxon>
        <taxon>Brucellaceae</taxon>
        <taxon>Brucella/Ochrobactrum group</taxon>
        <taxon>Brucella</taxon>
    </lineage>
</organism>
<gene>
    <name evidence="1" type="primary">hutH</name>
    <name type="ordered locus">BRA0930</name>
    <name type="ordered locus">BS1330_II0922</name>
</gene>
<keyword id="KW-0963">Cytoplasm</keyword>
<keyword id="KW-0369">Histidine metabolism</keyword>
<keyword id="KW-0456">Lyase</keyword>
<proteinExistence type="inferred from homology"/>
<dbReference type="EC" id="4.3.1.3" evidence="1"/>
<dbReference type="EMBL" id="AE014292">
    <property type="protein sequence ID" value="AAN34102.1"/>
    <property type="molecule type" value="Genomic_DNA"/>
</dbReference>
<dbReference type="EMBL" id="CP002998">
    <property type="protein sequence ID" value="AEM20378.1"/>
    <property type="molecule type" value="Genomic_DNA"/>
</dbReference>
<dbReference type="RefSeq" id="WP_006192207.1">
    <property type="nucleotide sequence ID" value="NZ_KN046805.1"/>
</dbReference>
<dbReference type="SMR" id="Q8FVB4"/>
<dbReference type="GeneID" id="45053927"/>
<dbReference type="KEGG" id="bms:BRA0930"/>
<dbReference type="KEGG" id="bsi:BS1330_II0922"/>
<dbReference type="PATRIC" id="fig|204722.21.peg.369"/>
<dbReference type="HOGENOM" id="CLU_014801_4_0_5"/>
<dbReference type="UniPathway" id="UPA00379">
    <property type="reaction ID" value="UER00549"/>
</dbReference>
<dbReference type="Proteomes" id="UP000007104">
    <property type="component" value="Chromosome II"/>
</dbReference>
<dbReference type="GO" id="GO:0005737">
    <property type="term" value="C:cytoplasm"/>
    <property type="evidence" value="ECO:0007669"/>
    <property type="project" value="UniProtKB-SubCell"/>
</dbReference>
<dbReference type="GO" id="GO:0004397">
    <property type="term" value="F:histidine ammonia-lyase activity"/>
    <property type="evidence" value="ECO:0007669"/>
    <property type="project" value="UniProtKB-UniRule"/>
</dbReference>
<dbReference type="GO" id="GO:0019556">
    <property type="term" value="P:L-histidine catabolic process to glutamate and formamide"/>
    <property type="evidence" value="ECO:0007669"/>
    <property type="project" value="UniProtKB-UniPathway"/>
</dbReference>
<dbReference type="GO" id="GO:0019557">
    <property type="term" value="P:L-histidine catabolic process to glutamate and formate"/>
    <property type="evidence" value="ECO:0007669"/>
    <property type="project" value="UniProtKB-UniPathway"/>
</dbReference>
<dbReference type="CDD" id="cd00332">
    <property type="entry name" value="PAL-HAL"/>
    <property type="match status" value="1"/>
</dbReference>
<dbReference type="FunFam" id="1.10.275.10:FF:000005">
    <property type="entry name" value="Histidine ammonia-lyase"/>
    <property type="match status" value="1"/>
</dbReference>
<dbReference type="FunFam" id="1.20.200.10:FF:000003">
    <property type="entry name" value="Histidine ammonia-lyase"/>
    <property type="match status" value="1"/>
</dbReference>
<dbReference type="Gene3D" id="1.20.200.10">
    <property type="entry name" value="Fumarase/aspartase (Central domain)"/>
    <property type="match status" value="1"/>
</dbReference>
<dbReference type="Gene3D" id="1.10.275.10">
    <property type="entry name" value="Fumarase/aspartase (N-terminal domain)"/>
    <property type="match status" value="1"/>
</dbReference>
<dbReference type="HAMAP" id="MF_00229">
    <property type="entry name" value="His_ammonia_lyase"/>
    <property type="match status" value="1"/>
</dbReference>
<dbReference type="InterPro" id="IPR001106">
    <property type="entry name" value="Aromatic_Lyase"/>
</dbReference>
<dbReference type="InterPro" id="IPR024083">
    <property type="entry name" value="Fumarase/histidase_N"/>
</dbReference>
<dbReference type="InterPro" id="IPR005921">
    <property type="entry name" value="HutH"/>
</dbReference>
<dbReference type="InterPro" id="IPR008948">
    <property type="entry name" value="L-Aspartase-like"/>
</dbReference>
<dbReference type="InterPro" id="IPR022313">
    <property type="entry name" value="Phe/His_NH3-lyase_AS"/>
</dbReference>
<dbReference type="NCBIfam" id="TIGR01225">
    <property type="entry name" value="hutH"/>
    <property type="match status" value="1"/>
</dbReference>
<dbReference type="NCBIfam" id="NF006871">
    <property type="entry name" value="PRK09367.1"/>
    <property type="match status" value="1"/>
</dbReference>
<dbReference type="PANTHER" id="PTHR10362">
    <property type="entry name" value="HISTIDINE AMMONIA-LYASE"/>
    <property type="match status" value="1"/>
</dbReference>
<dbReference type="Pfam" id="PF00221">
    <property type="entry name" value="Lyase_aromatic"/>
    <property type="match status" value="1"/>
</dbReference>
<dbReference type="SUPFAM" id="SSF48557">
    <property type="entry name" value="L-aspartase-like"/>
    <property type="match status" value="1"/>
</dbReference>
<dbReference type="PROSITE" id="PS00488">
    <property type="entry name" value="PAL_HISTIDASE"/>
    <property type="match status" value="1"/>
</dbReference>
<protein>
    <recommendedName>
        <fullName evidence="1">Histidine ammonia-lyase</fullName>
        <shortName evidence="1">Histidase</shortName>
        <ecNumber evidence="1">4.3.1.3</ecNumber>
    </recommendedName>
</protein>